<protein>
    <recommendedName>
        <fullName evidence="1">5-methyltetrahydropteroyltriglutamate--homocysteine methyltransferase</fullName>
        <ecNumber evidence="1">2.1.1.14</ecNumber>
    </recommendedName>
    <alternativeName>
        <fullName evidence="1">Cobalamin-independent methionine synthase</fullName>
    </alternativeName>
    <alternativeName>
        <fullName evidence="1">Methionine synthase, vitamin-B12 independent isozyme</fullName>
    </alternativeName>
</protein>
<organism>
    <name type="scientific">Coxiella burnetii (strain CbuK_Q154)</name>
    <name type="common">Coxiella burnetii (strain Q154)</name>
    <dbReference type="NCBI Taxonomy" id="434924"/>
    <lineage>
        <taxon>Bacteria</taxon>
        <taxon>Pseudomonadati</taxon>
        <taxon>Pseudomonadota</taxon>
        <taxon>Gammaproteobacteria</taxon>
        <taxon>Legionellales</taxon>
        <taxon>Coxiellaceae</taxon>
        <taxon>Coxiella</taxon>
    </lineage>
</organism>
<keyword id="KW-0028">Amino-acid biosynthesis</keyword>
<keyword id="KW-0479">Metal-binding</keyword>
<keyword id="KW-0486">Methionine biosynthesis</keyword>
<keyword id="KW-0489">Methyltransferase</keyword>
<keyword id="KW-0677">Repeat</keyword>
<keyword id="KW-0808">Transferase</keyword>
<keyword id="KW-0862">Zinc</keyword>
<evidence type="ECO:0000255" key="1">
    <source>
        <dbReference type="HAMAP-Rule" id="MF_00172"/>
    </source>
</evidence>
<sequence>MVYAHNLGFPRIGIKREMKKTVEAYWRGEISQQQLQQQAIELQLTNWKIQAEAGVDLIPVGDFSWYDHVLDMAVRVGAIPSRFKALNSNITDTMFCMARGQAPNGIETSACEMTKWFDTNYHYIVPEFTTNQSFELHHDDLFKSTKLALENNYRAKPVILGPLSFLWLGKCKGESFNKLLLLEKLLPVYAEIFEQLSSLGVEWVQVDEPILVLDLPPEWQQAFLTTYQQLNFFNLKCLLATYFGSLDDNLSLTCQLPVDGLHIDYCRAPDQLDSVLSQLPAEKILSVGIIDGRNIWCNDLNRSLTLLENIQSSLGDRLWVAPSCSLLHVPIDLDQENKLDVELKSWFAFAKQKVAEAAFLTRGLREGRESIGAELKKNEEVIISRKTSKRIHNPNVEKKAASVTERLMRRQHEHSIRKNKQTAQLNLPLFPTTTIGSFPQTSQIRCLRRDYKQGKIDDALYEEKIRQEIAEVIGIQVKLGLDVLVHGEPERNDMVEYFGELLDGIAITSNGWVQSYGSRCVKPPIIFGDVSRERPMTLRWIEYAQSLTTKSVKGMLTGPVTILAWSFVRDDQPRSQTAKQIALALRDEVQDLERSGVRVIQIDEPAFRECLPLRKAAWQDYLEWAVKCFRLASCGVKDETQIHTHMCYSEFNDIIEAIAALDADVITIESSRSETEILKSFEKFAYPNDIGPGIYDIHSPRIPRVAEIEELAVRALQYIPIERLWINPDCGLKTRNWEETKEALSRMVDAAKHLRKAFSSEKTPTIDLELQPAST</sequence>
<dbReference type="EC" id="2.1.1.14" evidence="1"/>
<dbReference type="EMBL" id="CP001020">
    <property type="protein sequence ID" value="ACJ21188.1"/>
    <property type="molecule type" value="Genomic_DNA"/>
</dbReference>
<dbReference type="RefSeq" id="WP_005769839.1">
    <property type="nucleotide sequence ID" value="NC_011528.1"/>
</dbReference>
<dbReference type="SMR" id="B6J6H8"/>
<dbReference type="KEGG" id="cbc:CbuK_2095"/>
<dbReference type="HOGENOM" id="CLU_013175_0_0_6"/>
<dbReference type="UniPathway" id="UPA00051">
    <property type="reaction ID" value="UER00082"/>
</dbReference>
<dbReference type="GO" id="GO:0003871">
    <property type="term" value="F:5-methyltetrahydropteroyltriglutamate-homocysteine S-methyltransferase activity"/>
    <property type="evidence" value="ECO:0007669"/>
    <property type="project" value="UniProtKB-UniRule"/>
</dbReference>
<dbReference type="GO" id="GO:0008270">
    <property type="term" value="F:zinc ion binding"/>
    <property type="evidence" value="ECO:0007669"/>
    <property type="project" value="InterPro"/>
</dbReference>
<dbReference type="GO" id="GO:0009086">
    <property type="term" value="P:methionine biosynthetic process"/>
    <property type="evidence" value="ECO:0007669"/>
    <property type="project" value="UniProtKB-UniRule"/>
</dbReference>
<dbReference type="GO" id="GO:0032259">
    <property type="term" value="P:methylation"/>
    <property type="evidence" value="ECO:0007669"/>
    <property type="project" value="UniProtKB-KW"/>
</dbReference>
<dbReference type="CDD" id="cd03311">
    <property type="entry name" value="CIMS_C_terminal_like"/>
    <property type="match status" value="1"/>
</dbReference>
<dbReference type="CDD" id="cd03312">
    <property type="entry name" value="CIMS_N_terminal_like"/>
    <property type="match status" value="1"/>
</dbReference>
<dbReference type="FunFam" id="3.20.20.210:FF:000002">
    <property type="entry name" value="5-methyltetrahydropteroyltriglutamate--homocysteine methyltransferase"/>
    <property type="match status" value="1"/>
</dbReference>
<dbReference type="FunFam" id="3.20.20.210:FF:000003">
    <property type="entry name" value="5-methyltetrahydropteroyltriglutamate--homocysteine methyltransferase"/>
    <property type="match status" value="1"/>
</dbReference>
<dbReference type="Gene3D" id="3.20.20.210">
    <property type="match status" value="2"/>
</dbReference>
<dbReference type="HAMAP" id="MF_00172">
    <property type="entry name" value="Meth_synth"/>
    <property type="match status" value="1"/>
</dbReference>
<dbReference type="InterPro" id="IPR013215">
    <property type="entry name" value="Cbl-indep_Met_Synth_N"/>
</dbReference>
<dbReference type="InterPro" id="IPR006276">
    <property type="entry name" value="Cobalamin-indep_Met_synthase"/>
</dbReference>
<dbReference type="InterPro" id="IPR002629">
    <property type="entry name" value="Met_Synth_C/arc"/>
</dbReference>
<dbReference type="InterPro" id="IPR038071">
    <property type="entry name" value="UROD/MetE-like_sf"/>
</dbReference>
<dbReference type="NCBIfam" id="TIGR01371">
    <property type="entry name" value="met_syn_B12ind"/>
    <property type="match status" value="1"/>
</dbReference>
<dbReference type="NCBIfam" id="NF003556">
    <property type="entry name" value="PRK05222.1"/>
    <property type="match status" value="1"/>
</dbReference>
<dbReference type="PANTHER" id="PTHR30519">
    <property type="entry name" value="5-METHYLTETRAHYDROPTEROYLTRIGLUTAMATE--HOMOCYSTEINE METHYLTRANSFERASE"/>
    <property type="match status" value="1"/>
</dbReference>
<dbReference type="Pfam" id="PF08267">
    <property type="entry name" value="Meth_synt_1"/>
    <property type="match status" value="1"/>
</dbReference>
<dbReference type="Pfam" id="PF01717">
    <property type="entry name" value="Meth_synt_2"/>
    <property type="match status" value="1"/>
</dbReference>
<dbReference type="PIRSF" id="PIRSF000382">
    <property type="entry name" value="MeTrfase_B12_ind"/>
    <property type="match status" value="1"/>
</dbReference>
<dbReference type="SUPFAM" id="SSF51726">
    <property type="entry name" value="UROD/MetE-like"/>
    <property type="match status" value="2"/>
</dbReference>
<name>METE_COXB1</name>
<comment type="function">
    <text evidence="1">Catalyzes the transfer of a methyl group from 5-methyltetrahydrofolate to homocysteine resulting in methionine formation.</text>
</comment>
<comment type="catalytic activity">
    <reaction evidence="1">
        <text>5-methyltetrahydropteroyltri-L-glutamate + L-homocysteine = tetrahydropteroyltri-L-glutamate + L-methionine</text>
        <dbReference type="Rhea" id="RHEA:21196"/>
        <dbReference type="ChEBI" id="CHEBI:57844"/>
        <dbReference type="ChEBI" id="CHEBI:58140"/>
        <dbReference type="ChEBI" id="CHEBI:58199"/>
        <dbReference type="ChEBI" id="CHEBI:58207"/>
        <dbReference type="EC" id="2.1.1.14"/>
    </reaction>
</comment>
<comment type="cofactor">
    <cofactor evidence="1">
        <name>Zn(2+)</name>
        <dbReference type="ChEBI" id="CHEBI:29105"/>
    </cofactor>
    <text evidence="1">Binds 1 zinc ion per subunit.</text>
</comment>
<comment type="pathway">
    <text evidence="1">Amino-acid biosynthesis; L-methionine biosynthesis via de novo pathway; L-methionine from L-homocysteine (MetE route): step 1/1.</text>
</comment>
<comment type="similarity">
    <text evidence="1">Belongs to the vitamin-B12 independent methionine synthase family.</text>
</comment>
<feature type="chain" id="PRO_1000097822" description="5-methyltetrahydropteroyltriglutamate--homocysteine methyltransferase">
    <location>
        <begin position="1"/>
        <end position="775"/>
    </location>
</feature>
<feature type="active site" description="Proton donor" evidence="1">
    <location>
        <position position="698"/>
    </location>
</feature>
<feature type="binding site" evidence="1">
    <location>
        <begin position="16"/>
        <end position="19"/>
    </location>
    <ligand>
        <name>5-methyltetrahydropteroyltri-L-glutamate</name>
        <dbReference type="ChEBI" id="CHEBI:58207"/>
    </ligand>
</feature>
<feature type="binding site" evidence="1">
    <location>
        <position position="115"/>
    </location>
    <ligand>
        <name>5-methyltetrahydropteroyltri-L-glutamate</name>
        <dbReference type="ChEBI" id="CHEBI:58207"/>
    </ligand>
</feature>
<feature type="binding site" evidence="1">
    <location>
        <begin position="435"/>
        <end position="437"/>
    </location>
    <ligand>
        <name>L-homocysteine</name>
        <dbReference type="ChEBI" id="CHEBI:58199"/>
    </ligand>
</feature>
<feature type="binding site" evidence="1">
    <location>
        <begin position="435"/>
        <end position="437"/>
    </location>
    <ligand>
        <name>L-methionine</name>
        <dbReference type="ChEBI" id="CHEBI:57844"/>
    </ligand>
</feature>
<feature type="binding site" evidence="1">
    <location>
        <position position="488"/>
    </location>
    <ligand>
        <name>L-homocysteine</name>
        <dbReference type="ChEBI" id="CHEBI:58199"/>
    </ligand>
</feature>
<feature type="binding site" evidence="1">
    <location>
        <position position="488"/>
    </location>
    <ligand>
        <name>L-methionine</name>
        <dbReference type="ChEBI" id="CHEBI:57844"/>
    </ligand>
</feature>
<feature type="binding site" evidence="1">
    <location>
        <begin position="519"/>
        <end position="520"/>
    </location>
    <ligand>
        <name>5-methyltetrahydropteroyltri-L-glutamate</name>
        <dbReference type="ChEBI" id="CHEBI:58207"/>
    </ligand>
</feature>
<feature type="binding site" evidence="1">
    <location>
        <position position="565"/>
    </location>
    <ligand>
        <name>5-methyltetrahydropteroyltri-L-glutamate</name>
        <dbReference type="ChEBI" id="CHEBI:58207"/>
    </ligand>
</feature>
<feature type="binding site" evidence="1">
    <location>
        <position position="603"/>
    </location>
    <ligand>
        <name>L-homocysteine</name>
        <dbReference type="ChEBI" id="CHEBI:58199"/>
    </ligand>
</feature>
<feature type="binding site" evidence="1">
    <location>
        <position position="603"/>
    </location>
    <ligand>
        <name>L-methionine</name>
        <dbReference type="ChEBI" id="CHEBI:57844"/>
    </ligand>
</feature>
<feature type="binding site" evidence="1">
    <location>
        <position position="609"/>
    </location>
    <ligand>
        <name>5-methyltetrahydropteroyltri-L-glutamate</name>
        <dbReference type="ChEBI" id="CHEBI:58207"/>
    </ligand>
</feature>
<feature type="binding site" evidence="1">
    <location>
        <position position="645"/>
    </location>
    <ligand>
        <name>Zn(2+)</name>
        <dbReference type="ChEBI" id="CHEBI:29105"/>
        <note>catalytic</note>
    </ligand>
</feature>
<feature type="binding site" evidence="1">
    <location>
        <position position="647"/>
    </location>
    <ligand>
        <name>Zn(2+)</name>
        <dbReference type="ChEBI" id="CHEBI:29105"/>
        <note>catalytic</note>
    </ligand>
</feature>
<feature type="binding site" evidence="1">
    <location>
        <position position="669"/>
    </location>
    <ligand>
        <name>Zn(2+)</name>
        <dbReference type="ChEBI" id="CHEBI:29105"/>
        <note>catalytic</note>
    </ligand>
</feature>
<feature type="binding site" evidence="1">
    <location>
        <position position="730"/>
    </location>
    <ligand>
        <name>Zn(2+)</name>
        <dbReference type="ChEBI" id="CHEBI:29105"/>
        <note>catalytic</note>
    </ligand>
</feature>
<reference key="1">
    <citation type="journal article" date="2009" name="Infect. Immun.">
        <title>Comparative genomics reveal extensive transposon-mediated genomic plasticity and diversity among potential effector proteins within the genus Coxiella.</title>
        <authorList>
            <person name="Beare P.A."/>
            <person name="Unsworth N."/>
            <person name="Andoh M."/>
            <person name="Voth D.E."/>
            <person name="Omsland A."/>
            <person name="Gilk S.D."/>
            <person name="Williams K.P."/>
            <person name="Sobral B.W."/>
            <person name="Kupko J.J. III"/>
            <person name="Porcella S.F."/>
            <person name="Samuel J.E."/>
            <person name="Heinzen R.A."/>
        </authorList>
    </citation>
    <scope>NUCLEOTIDE SEQUENCE [LARGE SCALE GENOMIC DNA]</scope>
    <source>
        <strain>CbuK_Q154</strain>
    </source>
</reference>
<accession>B6J6H8</accession>
<gene>
    <name evidence="1" type="primary">metE</name>
    <name type="ordered locus">CbuK_2095</name>
</gene>
<proteinExistence type="inferred from homology"/>